<comment type="similarity">
    <text evidence="1">Belongs to the bacterial ribosomal protein bL35 family.</text>
</comment>
<dbReference type="EMBL" id="CP000109">
    <property type="protein sequence ID" value="ABB42257.1"/>
    <property type="molecule type" value="Genomic_DNA"/>
</dbReference>
<dbReference type="SMR" id="Q31F16"/>
<dbReference type="STRING" id="317025.Tcr_1665"/>
<dbReference type="KEGG" id="tcx:Tcr_1665"/>
<dbReference type="eggNOG" id="COG0291">
    <property type="taxonomic scope" value="Bacteria"/>
</dbReference>
<dbReference type="HOGENOM" id="CLU_169643_1_1_6"/>
<dbReference type="OrthoDB" id="47476at2"/>
<dbReference type="GO" id="GO:0022625">
    <property type="term" value="C:cytosolic large ribosomal subunit"/>
    <property type="evidence" value="ECO:0007669"/>
    <property type="project" value="TreeGrafter"/>
</dbReference>
<dbReference type="GO" id="GO:0003735">
    <property type="term" value="F:structural constituent of ribosome"/>
    <property type="evidence" value="ECO:0007669"/>
    <property type="project" value="InterPro"/>
</dbReference>
<dbReference type="GO" id="GO:0006412">
    <property type="term" value="P:translation"/>
    <property type="evidence" value="ECO:0007669"/>
    <property type="project" value="UniProtKB-UniRule"/>
</dbReference>
<dbReference type="FunFam" id="4.10.410.60:FF:000001">
    <property type="entry name" value="50S ribosomal protein L35"/>
    <property type="match status" value="1"/>
</dbReference>
<dbReference type="Gene3D" id="4.10.410.60">
    <property type="match status" value="1"/>
</dbReference>
<dbReference type="HAMAP" id="MF_00514">
    <property type="entry name" value="Ribosomal_bL35"/>
    <property type="match status" value="1"/>
</dbReference>
<dbReference type="InterPro" id="IPR001706">
    <property type="entry name" value="Ribosomal_bL35"/>
</dbReference>
<dbReference type="InterPro" id="IPR021137">
    <property type="entry name" value="Ribosomal_bL35-like"/>
</dbReference>
<dbReference type="InterPro" id="IPR018265">
    <property type="entry name" value="Ribosomal_bL35_CS"/>
</dbReference>
<dbReference type="InterPro" id="IPR037229">
    <property type="entry name" value="Ribosomal_bL35_sf"/>
</dbReference>
<dbReference type="NCBIfam" id="TIGR00001">
    <property type="entry name" value="rpmI_bact"/>
    <property type="match status" value="1"/>
</dbReference>
<dbReference type="PANTHER" id="PTHR33343">
    <property type="entry name" value="54S RIBOSOMAL PROTEIN BL35M"/>
    <property type="match status" value="1"/>
</dbReference>
<dbReference type="PANTHER" id="PTHR33343:SF1">
    <property type="entry name" value="LARGE RIBOSOMAL SUBUNIT PROTEIN BL35M"/>
    <property type="match status" value="1"/>
</dbReference>
<dbReference type="Pfam" id="PF01632">
    <property type="entry name" value="Ribosomal_L35p"/>
    <property type="match status" value="1"/>
</dbReference>
<dbReference type="PRINTS" id="PR00064">
    <property type="entry name" value="RIBOSOMALL35"/>
</dbReference>
<dbReference type="SUPFAM" id="SSF143034">
    <property type="entry name" value="L35p-like"/>
    <property type="match status" value="1"/>
</dbReference>
<dbReference type="PROSITE" id="PS00936">
    <property type="entry name" value="RIBOSOMAL_L35"/>
    <property type="match status" value="1"/>
</dbReference>
<gene>
    <name evidence="1" type="primary">rpmI</name>
    <name type="ordered locus">Tcr_1665</name>
</gene>
<feature type="chain" id="PRO_0000258779" description="Large ribosomal subunit protein bL35">
    <location>
        <begin position="1"/>
        <end position="65"/>
    </location>
</feature>
<feature type="region of interest" description="Disordered" evidence="2">
    <location>
        <begin position="1"/>
        <end position="26"/>
    </location>
</feature>
<feature type="compositionally biased region" description="Basic residues" evidence="2">
    <location>
        <begin position="10"/>
        <end position="26"/>
    </location>
</feature>
<keyword id="KW-0687">Ribonucleoprotein</keyword>
<keyword id="KW-0689">Ribosomal protein</keyword>
<protein>
    <recommendedName>
        <fullName evidence="1">Large ribosomal subunit protein bL35</fullName>
    </recommendedName>
    <alternativeName>
        <fullName evidence="3">50S ribosomal protein L35</fullName>
    </alternativeName>
</protein>
<evidence type="ECO:0000255" key="1">
    <source>
        <dbReference type="HAMAP-Rule" id="MF_00514"/>
    </source>
</evidence>
<evidence type="ECO:0000256" key="2">
    <source>
        <dbReference type="SAM" id="MobiDB-lite"/>
    </source>
</evidence>
<evidence type="ECO:0000305" key="3"/>
<sequence>MPKMKTNKSAQKRFKKTGSGRFKCKQSHLRHILTKKSTKRKRHLRAASMIHDNDVAMVRRMLPYA</sequence>
<accession>Q31F16</accession>
<organism>
    <name type="scientific">Hydrogenovibrio crunogenus (strain DSM 25203 / XCL-2)</name>
    <name type="common">Thiomicrospira crunogena</name>
    <dbReference type="NCBI Taxonomy" id="317025"/>
    <lineage>
        <taxon>Bacteria</taxon>
        <taxon>Pseudomonadati</taxon>
        <taxon>Pseudomonadota</taxon>
        <taxon>Gammaproteobacteria</taxon>
        <taxon>Thiotrichales</taxon>
        <taxon>Piscirickettsiaceae</taxon>
        <taxon>Hydrogenovibrio</taxon>
    </lineage>
</organism>
<name>RL35_HYDCU</name>
<proteinExistence type="inferred from homology"/>
<reference key="1">
    <citation type="journal article" date="2006" name="PLoS Biol.">
        <title>The genome of deep-sea vent chemolithoautotroph Thiomicrospira crunogena XCL-2.</title>
        <authorList>
            <person name="Scott K.M."/>
            <person name="Sievert S.M."/>
            <person name="Abril F.N."/>
            <person name="Ball L.A."/>
            <person name="Barrett C.J."/>
            <person name="Blake R.A."/>
            <person name="Boller A.J."/>
            <person name="Chain P.S.G."/>
            <person name="Clark J.A."/>
            <person name="Davis C.R."/>
            <person name="Detter C."/>
            <person name="Do K.F."/>
            <person name="Dobrinski K.P."/>
            <person name="Faza B.I."/>
            <person name="Fitzpatrick K.A."/>
            <person name="Freyermuth S.K."/>
            <person name="Harmer T.L."/>
            <person name="Hauser L.J."/>
            <person name="Huegler M."/>
            <person name="Kerfeld C.A."/>
            <person name="Klotz M.G."/>
            <person name="Kong W.W."/>
            <person name="Land M."/>
            <person name="Lapidus A."/>
            <person name="Larimer F.W."/>
            <person name="Longo D.L."/>
            <person name="Lucas S."/>
            <person name="Malfatti S.A."/>
            <person name="Massey S.E."/>
            <person name="Martin D.D."/>
            <person name="McCuddin Z."/>
            <person name="Meyer F."/>
            <person name="Moore J.L."/>
            <person name="Ocampo L.H. Jr."/>
            <person name="Paul J.H."/>
            <person name="Paulsen I.T."/>
            <person name="Reep D.K."/>
            <person name="Ren Q."/>
            <person name="Ross R.L."/>
            <person name="Sato P.Y."/>
            <person name="Thomas P."/>
            <person name="Tinkham L.E."/>
            <person name="Zeruth G.T."/>
        </authorList>
    </citation>
    <scope>NUCLEOTIDE SEQUENCE [LARGE SCALE GENOMIC DNA]</scope>
    <source>
        <strain>DSM 25203 / XCL-2</strain>
    </source>
</reference>